<gene>
    <name type="primary">NRN1</name>
    <name type="synonym">NRN</name>
</gene>
<evidence type="ECO:0000250" key="1"/>
<evidence type="ECO:0000255" key="2"/>
<evidence type="ECO:0000305" key="3"/>
<proteinExistence type="evidence at protein level"/>
<accession>Q9NPD7</accession>
<accession>B2RA93</accession>
<accession>Q7Z4Y1</accession>
<dbReference type="EMBL" id="AF136631">
    <property type="protein sequence ID" value="AAF62371.1"/>
    <property type="molecule type" value="mRNA"/>
</dbReference>
<dbReference type="EMBL" id="AF114833">
    <property type="protein sequence ID" value="AAP97232.1"/>
    <property type="molecule type" value="mRNA"/>
</dbReference>
<dbReference type="EMBL" id="AL136307">
    <property type="status" value="NOT_ANNOTATED_CDS"/>
    <property type="molecule type" value="Genomic_DNA"/>
</dbReference>
<dbReference type="EMBL" id="AK314095">
    <property type="protein sequence ID" value="BAG36790.1"/>
    <property type="molecule type" value="mRNA"/>
</dbReference>
<dbReference type="EMBL" id="CH471087">
    <property type="protein sequence ID" value="EAW55184.1"/>
    <property type="molecule type" value="Genomic_DNA"/>
</dbReference>
<dbReference type="EMBL" id="BC002683">
    <property type="protein sequence ID" value="AAH02683.1"/>
    <property type="molecule type" value="mRNA"/>
</dbReference>
<dbReference type="EMBL" id="BC042019">
    <property type="protein sequence ID" value="AAH42019.1"/>
    <property type="molecule type" value="mRNA"/>
</dbReference>
<dbReference type="CCDS" id="CCDS4495.1"/>
<dbReference type="RefSeq" id="NP_001265639.1">
    <property type="nucleotide sequence ID" value="NM_001278710.2"/>
</dbReference>
<dbReference type="RefSeq" id="NP_001265640.1">
    <property type="nucleotide sequence ID" value="NM_001278711.1"/>
</dbReference>
<dbReference type="RefSeq" id="NP_057672.1">
    <property type="nucleotide sequence ID" value="NM_016588.3"/>
</dbReference>
<dbReference type="RefSeq" id="XP_054211544.1">
    <property type="nucleotide sequence ID" value="XM_054355569.1"/>
</dbReference>
<dbReference type="BioGRID" id="119450">
    <property type="interactions" value="40"/>
</dbReference>
<dbReference type="FunCoup" id="Q9NPD7">
    <property type="interactions" value="520"/>
</dbReference>
<dbReference type="IntAct" id="Q9NPD7">
    <property type="interactions" value="38"/>
</dbReference>
<dbReference type="STRING" id="9606.ENSP00000480483"/>
<dbReference type="iPTMnet" id="Q9NPD7"/>
<dbReference type="PhosphoSitePlus" id="Q9NPD7"/>
<dbReference type="SwissPalm" id="Q9NPD7"/>
<dbReference type="BioMuta" id="NRN1"/>
<dbReference type="jPOST" id="Q9NPD7"/>
<dbReference type="MassIVE" id="Q9NPD7"/>
<dbReference type="PaxDb" id="9606-ENSP00000480483"/>
<dbReference type="PeptideAtlas" id="Q9NPD7"/>
<dbReference type="ProteomicsDB" id="81975"/>
<dbReference type="Pumba" id="Q9NPD7"/>
<dbReference type="Antibodypedia" id="24561">
    <property type="antibodies" value="189 antibodies from 31 providers"/>
</dbReference>
<dbReference type="DNASU" id="51299"/>
<dbReference type="Ensembl" id="ENST00000244766.7">
    <property type="protein sequence ID" value="ENSP00000244766.2"/>
    <property type="gene ID" value="ENSG00000124785.9"/>
</dbReference>
<dbReference type="Ensembl" id="ENST00000616243.1">
    <property type="protein sequence ID" value="ENSP00000484055.1"/>
    <property type="gene ID" value="ENSG00000124785.9"/>
</dbReference>
<dbReference type="GeneID" id="51299"/>
<dbReference type="KEGG" id="hsa:51299"/>
<dbReference type="MANE-Select" id="ENST00000244766.7">
    <property type="protein sequence ID" value="ENSP00000244766.2"/>
    <property type="RefSeq nucleotide sequence ID" value="NM_016588.3"/>
    <property type="RefSeq protein sequence ID" value="NP_057672.1"/>
</dbReference>
<dbReference type="UCSC" id="uc003mwu.4">
    <property type="organism name" value="human"/>
</dbReference>
<dbReference type="AGR" id="HGNC:17972"/>
<dbReference type="CTD" id="51299"/>
<dbReference type="DisGeNET" id="51299"/>
<dbReference type="GeneCards" id="NRN1"/>
<dbReference type="HGNC" id="HGNC:17972">
    <property type="gene designation" value="NRN1"/>
</dbReference>
<dbReference type="HPA" id="ENSG00000124785">
    <property type="expression patterns" value="Tissue enhanced (brain)"/>
</dbReference>
<dbReference type="MIM" id="607409">
    <property type="type" value="gene"/>
</dbReference>
<dbReference type="neXtProt" id="NX_Q9NPD7"/>
<dbReference type="OpenTargets" id="ENSG00000124785"/>
<dbReference type="PharmGKB" id="PA38477"/>
<dbReference type="VEuPathDB" id="HostDB:ENSG00000124785"/>
<dbReference type="eggNOG" id="ENOG502RZNR">
    <property type="taxonomic scope" value="Eukaryota"/>
</dbReference>
<dbReference type="GeneTree" id="ENSGT00530000063853"/>
<dbReference type="HOGENOM" id="CLU_135101_0_0_1"/>
<dbReference type="InParanoid" id="Q9NPD7"/>
<dbReference type="OMA" id="CAYWEDF"/>
<dbReference type="OrthoDB" id="9928047at2759"/>
<dbReference type="PAN-GO" id="Q9NPD7">
    <property type="GO annotations" value="2 GO annotations based on evolutionary models"/>
</dbReference>
<dbReference type="PhylomeDB" id="Q9NPD7"/>
<dbReference type="TreeFam" id="TF332589"/>
<dbReference type="PathwayCommons" id="Q9NPD7"/>
<dbReference type="Reactome" id="R-HSA-163125">
    <property type="pathway name" value="Post-translational modification: synthesis of GPI-anchored proteins"/>
</dbReference>
<dbReference type="SignaLink" id="Q9NPD7"/>
<dbReference type="SIGNOR" id="Q9NPD7"/>
<dbReference type="BioGRID-ORCS" id="51299">
    <property type="hits" value="11 hits in 1149 CRISPR screens"/>
</dbReference>
<dbReference type="CD-CODE" id="FB4E32DD">
    <property type="entry name" value="Presynaptic clusters and postsynaptic densities"/>
</dbReference>
<dbReference type="ChiTaRS" id="NRN1">
    <property type="organism name" value="human"/>
</dbReference>
<dbReference type="GenomeRNAi" id="51299"/>
<dbReference type="Pharos" id="Q9NPD7">
    <property type="development level" value="Tbio"/>
</dbReference>
<dbReference type="PRO" id="PR:Q9NPD7"/>
<dbReference type="Proteomes" id="UP000005640">
    <property type="component" value="Chromosome 6"/>
</dbReference>
<dbReference type="RNAct" id="Q9NPD7">
    <property type="molecule type" value="protein"/>
</dbReference>
<dbReference type="Bgee" id="ENSG00000124785">
    <property type="expression patterns" value="Expressed in cerebellar cortex and 179 other cell types or tissues"/>
</dbReference>
<dbReference type="ExpressionAtlas" id="Q9NPD7">
    <property type="expression patterns" value="baseline and differential"/>
</dbReference>
<dbReference type="GO" id="GO:0032281">
    <property type="term" value="C:AMPA glutamate receptor complex"/>
    <property type="evidence" value="ECO:0007669"/>
    <property type="project" value="Ensembl"/>
</dbReference>
<dbReference type="GO" id="GO:0005576">
    <property type="term" value="C:extracellular region"/>
    <property type="evidence" value="ECO:0000304"/>
    <property type="project" value="Reactome"/>
</dbReference>
<dbReference type="GO" id="GO:0005615">
    <property type="term" value="C:extracellular space"/>
    <property type="evidence" value="ECO:0007669"/>
    <property type="project" value="Ensembl"/>
</dbReference>
<dbReference type="GO" id="GO:0098978">
    <property type="term" value="C:glutamatergic synapse"/>
    <property type="evidence" value="ECO:0007669"/>
    <property type="project" value="Ensembl"/>
</dbReference>
<dbReference type="GO" id="GO:0005886">
    <property type="term" value="C:plasma membrane"/>
    <property type="evidence" value="ECO:0000318"/>
    <property type="project" value="GO_Central"/>
</dbReference>
<dbReference type="GO" id="GO:0098793">
    <property type="term" value="C:presynapse"/>
    <property type="evidence" value="ECO:0007669"/>
    <property type="project" value="GOC"/>
</dbReference>
<dbReference type="GO" id="GO:0098552">
    <property type="term" value="C:side of membrane"/>
    <property type="evidence" value="ECO:0007669"/>
    <property type="project" value="UniProtKB-KW"/>
</dbReference>
<dbReference type="GO" id="GO:0042802">
    <property type="term" value="F:identical protein binding"/>
    <property type="evidence" value="ECO:0007669"/>
    <property type="project" value="Ensembl"/>
</dbReference>
<dbReference type="GO" id="GO:1990138">
    <property type="term" value="P:neuron projection extension"/>
    <property type="evidence" value="ECO:0000318"/>
    <property type="project" value="GO_Central"/>
</dbReference>
<dbReference type="GO" id="GO:0099171">
    <property type="term" value="P:presynaptic modulation of chemical synaptic transmission"/>
    <property type="evidence" value="ECO:0007669"/>
    <property type="project" value="Ensembl"/>
</dbReference>
<dbReference type="GO" id="GO:0090128">
    <property type="term" value="P:regulation of synapse maturation"/>
    <property type="evidence" value="ECO:0007669"/>
    <property type="project" value="Ensembl"/>
</dbReference>
<dbReference type="InterPro" id="IPR026144">
    <property type="entry name" value="Neuritin_fam"/>
</dbReference>
<dbReference type="PANTHER" id="PTHR15902:SF1">
    <property type="entry name" value="NEURITIN"/>
    <property type="match status" value="1"/>
</dbReference>
<dbReference type="PANTHER" id="PTHR15902">
    <property type="entry name" value="NEURITIN-RELATED"/>
    <property type="match status" value="1"/>
</dbReference>
<dbReference type="Pfam" id="PF15056">
    <property type="entry name" value="NRN1"/>
    <property type="match status" value="1"/>
</dbReference>
<protein>
    <recommendedName>
        <fullName>Neuritin</fullName>
    </recommendedName>
</protein>
<organism>
    <name type="scientific">Homo sapiens</name>
    <name type="common">Human</name>
    <dbReference type="NCBI Taxonomy" id="9606"/>
    <lineage>
        <taxon>Eukaryota</taxon>
        <taxon>Metazoa</taxon>
        <taxon>Chordata</taxon>
        <taxon>Craniata</taxon>
        <taxon>Vertebrata</taxon>
        <taxon>Euteleostomi</taxon>
        <taxon>Mammalia</taxon>
        <taxon>Eutheria</taxon>
        <taxon>Euarchontoglires</taxon>
        <taxon>Primates</taxon>
        <taxon>Haplorrhini</taxon>
        <taxon>Catarrhini</taxon>
        <taxon>Hominidae</taxon>
        <taxon>Homo</taxon>
    </lineage>
</organism>
<sequence>MGLKLNGRYISLILAVQIAYLVQAVRAAGKCDAVFKGFSDCLLKLGDSMANYPQGLDDKTNIKTVCTYWEDFHSCTVTALTDCQEGAKDMWDKLRKESKNLNIQGSLFELCGSGNGAAGSLLPAFPVLLVSLSAALATWLSF</sequence>
<name>NRN1_HUMAN</name>
<comment type="function">
    <text evidence="1">Promotes neurite outgrowth and especially branching of neuritic processes in primary hippocampal and cortical cells.</text>
</comment>
<comment type="subunit">
    <text evidence="1">Component of the outer core of AMPAR complex. AMPAR complex consists of an inner core made of 4 pore-forming GluA/GRIA proteins (GRIA1, GRIA2, GRIA3 and GRIA4) and 4 major auxiliary subunits arranged in a twofold symmetry. One of the two pairs of distinct binding sites is occupied either by CNIH2, CNIH3 or CACNG2, CACNG3. The other harbors CACNG2, CACNG3, CACNG4, CACNG8 or GSG1L. This inner core of AMPAR complex is complemented by outer core constituents binding directly to the GluA/GRIA proteins at sites distinct from the interaction sites of the inner core constituents. Outer core constituents include at least PRRT1, PRRT2, CKAMP44/SHISA9, FRRS1L and NRN1. The proteins of the inner and outer core serve as a platform for other, more peripherally associated AMPAR constituents. Alone or in combination, these auxiliary subunits control the gating and pharmacology of the AMPAR complex and profoundly impact their biogenesis and protein processing (By similarity).</text>
</comment>
<comment type="subcellular location">
    <subcellularLocation>
        <location evidence="3">Cell membrane</location>
        <topology evidence="3">Lipid-anchor</topology>
        <topology evidence="3">GPI-anchor</topology>
    </subcellularLocation>
    <subcellularLocation>
        <location evidence="1">Synapse</location>
    </subcellularLocation>
</comment>
<comment type="similarity">
    <text evidence="3">Belongs to the neuritin family.</text>
</comment>
<feature type="signal peptide" evidence="2">
    <location>
        <begin position="1"/>
        <end position="27"/>
    </location>
</feature>
<feature type="chain" id="PRO_0000262512" description="Neuritin">
    <location>
        <begin position="28"/>
        <end position="116"/>
    </location>
</feature>
<feature type="propeptide" id="PRO_0000262513" description="Removed in mature form" evidence="2">
    <location>
        <begin position="117"/>
        <end position="142"/>
    </location>
</feature>
<feature type="lipid moiety-binding region" description="GPI-anchor amidated glycine" evidence="2">
    <location>
        <position position="116"/>
    </location>
</feature>
<feature type="sequence conflict" description="In Ref. 3; AAP97232." evidence="3" ref="3">
    <original>SM</original>
    <variation>TW</variation>
    <location>
        <begin position="48"/>
        <end position="49"/>
    </location>
</feature>
<feature type="sequence conflict" description="In Ref. 3; AAP97232." evidence="3" ref="3">
    <original>GL</original>
    <variation>AW</variation>
    <location>
        <begin position="55"/>
        <end position="56"/>
    </location>
</feature>
<feature type="sequence conflict" description="In Ref. 3; AAP97232." evidence="3" ref="3">
    <original>SGN</original>
    <variation>RAT</variation>
    <location>
        <begin position="113"/>
        <end position="115"/>
    </location>
</feature>
<reference key="1">
    <citation type="journal article" date="1997" name="Proc. Natl. Acad. Sci. U.S.A.">
        <title>Neuritin: a gene induced by neural activity and neurotrophins that promotes neuritogenesis.</title>
        <authorList>
            <person name="Naeve G.S."/>
            <person name="Ramakrishnan M."/>
            <person name="Kramer R."/>
            <person name="Hevroni D."/>
            <person name="Citri Y."/>
            <person name="Theill L.E."/>
        </authorList>
    </citation>
    <scope>NUCLEOTIDE SEQUENCE [MRNA]</scope>
    <source>
        <tissue>Adrenal cortex</tissue>
    </source>
</reference>
<reference key="2">
    <citation type="submission" date="1999-03" db="EMBL/GenBank/DDBJ databases">
        <title>Isolation and cloning of a novel human cDNA encoding rat neuritin homolog.</title>
        <authorList>
            <person name="Zhou H."/>
            <person name="Huang X."/>
            <person name="Zhou Y."/>
            <person name="Hu S."/>
            <person name="Tang X."/>
            <person name="Yuan J."/>
            <person name="Qiang B."/>
        </authorList>
    </citation>
    <scope>NUCLEOTIDE SEQUENCE [MRNA]</scope>
</reference>
<reference key="3">
    <citation type="submission" date="2003-07" db="EMBL/GenBank/DDBJ databases">
        <title>Cloning of a novel human cDNA homologous to Rattus norvegicus neuritin mRNA.</title>
        <authorList>
            <person name="Fan Y.X."/>
            <person name="Yu L."/>
            <person name="Zhang X.N."/>
            <person name="Xin Y.R."/>
            <person name="Wang X.K."/>
            <person name="Zhao S.Y."/>
        </authorList>
    </citation>
    <scope>NUCLEOTIDE SEQUENCE [MRNA]</scope>
</reference>
<reference key="4">
    <citation type="journal article" date="2004" name="Nat. Genet.">
        <title>Complete sequencing and characterization of 21,243 full-length human cDNAs.</title>
        <authorList>
            <person name="Ota T."/>
            <person name="Suzuki Y."/>
            <person name="Nishikawa T."/>
            <person name="Otsuki T."/>
            <person name="Sugiyama T."/>
            <person name="Irie R."/>
            <person name="Wakamatsu A."/>
            <person name="Hayashi K."/>
            <person name="Sato H."/>
            <person name="Nagai K."/>
            <person name="Kimura K."/>
            <person name="Makita H."/>
            <person name="Sekine M."/>
            <person name="Obayashi M."/>
            <person name="Nishi T."/>
            <person name="Shibahara T."/>
            <person name="Tanaka T."/>
            <person name="Ishii S."/>
            <person name="Yamamoto J."/>
            <person name="Saito K."/>
            <person name="Kawai Y."/>
            <person name="Isono Y."/>
            <person name="Nakamura Y."/>
            <person name="Nagahari K."/>
            <person name="Murakami K."/>
            <person name="Yasuda T."/>
            <person name="Iwayanagi T."/>
            <person name="Wagatsuma M."/>
            <person name="Shiratori A."/>
            <person name="Sudo H."/>
            <person name="Hosoiri T."/>
            <person name="Kaku Y."/>
            <person name="Kodaira H."/>
            <person name="Kondo H."/>
            <person name="Sugawara M."/>
            <person name="Takahashi M."/>
            <person name="Kanda K."/>
            <person name="Yokoi T."/>
            <person name="Furuya T."/>
            <person name="Kikkawa E."/>
            <person name="Omura Y."/>
            <person name="Abe K."/>
            <person name="Kamihara K."/>
            <person name="Katsuta N."/>
            <person name="Sato K."/>
            <person name="Tanikawa M."/>
            <person name="Yamazaki M."/>
            <person name="Ninomiya K."/>
            <person name="Ishibashi T."/>
            <person name="Yamashita H."/>
            <person name="Murakawa K."/>
            <person name="Fujimori K."/>
            <person name="Tanai H."/>
            <person name="Kimata M."/>
            <person name="Watanabe M."/>
            <person name="Hiraoka S."/>
            <person name="Chiba Y."/>
            <person name="Ishida S."/>
            <person name="Ono Y."/>
            <person name="Takiguchi S."/>
            <person name="Watanabe S."/>
            <person name="Yosida M."/>
            <person name="Hotuta T."/>
            <person name="Kusano J."/>
            <person name="Kanehori K."/>
            <person name="Takahashi-Fujii A."/>
            <person name="Hara H."/>
            <person name="Tanase T.-O."/>
            <person name="Nomura Y."/>
            <person name="Togiya S."/>
            <person name="Komai F."/>
            <person name="Hara R."/>
            <person name="Takeuchi K."/>
            <person name="Arita M."/>
            <person name="Imose N."/>
            <person name="Musashino K."/>
            <person name="Yuuki H."/>
            <person name="Oshima A."/>
            <person name="Sasaki N."/>
            <person name="Aotsuka S."/>
            <person name="Yoshikawa Y."/>
            <person name="Matsunawa H."/>
            <person name="Ichihara T."/>
            <person name="Shiohata N."/>
            <person name="Sano S."/>
            <person name="Moriya S."/>
            <person name="Momiyama H."/>
            <person name="Satoh N."/>
            <person name="Takami S."/>
            <person name="Terashima Y."/>
            <person name="Suzuki O."/>
            <person name="Nakagawa S."/>
            <person name="Senoh A."/>
            <person name="Mizoguchi H."/>
            <person name="Goto Y."/>
            <person name="Shimizu F."/>
            <person name="Wakebe H."/>
            <person name="Hishigaki H."/>
            <person name="Watanabe T."/>
            <person name="Sugiyama A."/>
            <person name="Takemoto M."/>
            <person name="Kawakami B."/>
            <person name="Yamazaki M."/>
            <person name="Watanabe K."/>
            <person name="Kumagai A."/>
            <person name="Itakura S."/>
            <person name="Fukuzumi Y."/>
            <person name="Fujimori Y."/>
            <person name="Komiyama M."/>
            <person name="Tashiro H."/>
            <person name="Tanigami A."/>
            <person name="Fujiwara T."/>
            <person name="Ono T."/>
            <person name="Yamada K."/>
            <person name="Fujii Y."/>
            <person name="Ozaki K."/>
            <person name="Hirao M."/>
            <person name="Ohmori Y."/>
            <person name="Kawabata A."/>
            <person name="Hikiji T."/>
            <person name="Kobatake N."/>
            <person name="Inagaki H."/>
            <person name="Ikema Y."/>
            <person name="Okamoto S."/>
            <person name="Okitani R."/>
            <person name="Kawakami T."/>
            <person name="Noguchi S."/>
            <person name="Itoh T."/>
            <person name="Shigeta K."/>
            <person name="Senba T."/>
            <person name="Matsumura K."/>
            <person name="Nakajima Y."/>
            <person name="Mizuno T."/>
            <person name="Morinaga M."/>
            <person name="Sasaki M."/>
            <person name="Togashi T."/>
            <person name="Oyama M."/>
            <person name="Hata H."/>
            <person name="Watanabe M."/>
            <person name="Komatsu T."/>
            <person name="Mizushima-Sugano J."/>
            <person name="Satoh T."/>
            <person name="Shirai Y."/>
            <person name="Takahashi Y."/>
            <person name="Nakagawa K."/>
            <person name="Okumura K."/>
            <person name="Nagase T."/>
            <person name="Nomura N."/>
            <person name="Kikuchi H."/>
            <person name="Masuho Y."/>
            <person name="Yamashita R."/>
            <person name="Nakai K."/>
            <person name="Yada T."/>
            <person name="Nakamura Y."/>
            <person name="Ohara O."/>
            <person name="Isogai T."/>
            <person name="Sugano S."/>
        </authorList>
    </citation>
    <scope>NUCLEOTIDE SEQUENCE [LARGE SCALE MRNA]</scope>
    <source>
        <tissue>Pericardium</tissue>
    </source>
</reference>
<reference key="5">
    <citation type="journal article" date="2003" name="Nature">
        <title>The DNA sequence and analysis of human chromosome 6.</title>
        <authorList>
            <person name="Mungall A.J."/>
            <person name="Palmer S.A."/>
            <person name="Sims S.K."/>
            <person name="Edwards C.A."/>
            <person name="Ashurst J.L."/>
            <person name="Wilming L."/>
            <person name="Jones M.C."/>
            <person name="Horton R."/>
            <person name="Hunt S.E."/>
            <person name="Scott C.E."/>
            <person name="Gilbert J.G.R."/>
            <person name="Clamp M.E."/>
            <person name="Bethel G."/>
            <person name="Milne S."/>
            <person name="Ainscough R."/>
            <person name="Almeida J.P."/>
            <person name="Ambrose K.D."/>
            <person name="Andrews T.D."/>
            <person name="Ashwell R.I.S."/>
            <person name="Babbage A.K."/>
            <person name="Bagguley C.L."/>
            <person name="Bailey J."/>
            <person name="Banerjee R."/>
            <person name="Barker D.J."/>
            <person name="Barlow K.F."/>
            <person name="Bates K."/>
            <person name="Beare D.M."/>
            <person name="Beasley H."/>
            <person name="Beasley O."/>
            <person name="Bird C.P."/>
            <person name="Blakey S.E."/>
            <person name="Bray-Allen S."/>
            <person name="Brook J."/>
            <person name="Brown A.J."/>
            <person name="Brown J.Y."/>
            <person name="Burford D.C."/>
            <person name="Burrill W."/>
            <person name="Burton J."/>
            <person name="Carder C."/>
            <person name="Carter N.P."/>
            <person name="Chapman J.C."/>
            <person name="Clark S.Y."/>
            <person name="Clark G."/>
            <person name="Clee C.M."/>
            <person name="Clegg S."/>
            <person name="Cobley V."/>
            <person name="Collier R.E."/>
            <person name="Collins J.E."/>
            <person name="Colman L.K."/>
            <person name="Corby N.R."/>
            <person name="Coville G.J."/>
            <person name="Culley K.M."/>
            <person name="Dhami P."/>
            <person name="Davies J."/>
            <person name="Dunn M."/>
            <person name="Earthrowl M.E."/>
            <person name="Ellington A.E."/>
            <person name="Evans K.A."/>
            <person name="Faulkner L."/>
            <person name="Francis M.D."/>
            <person name="Frankish A."/>
            <person name="Frankland J."/>
            <person name="French L."/>
            <person name="Garner P."/>
            <person name="Garnett J."/>
            <person name="Ghori M.J."/>
            <person name="Gilby L.M."/>
            <person name="Gillson C.J."/>
            <person name="Glithero R.J."/>
            <person name="Grafham D.V."/>
            <person name="Grant M."/>
            <person name="Gribble S."/>
            <person name="Griffiths C."/>
            <person name="Griffiths M.N.D."/>
            <person name="Hall R."/>
            <person name="Halls K.S."/>
            <person name="Hammond S."/>
            <person name="Harley J.L."/>
            <person name="Hart E.A."/>
            <person name="Heath P.D."/>
            <person name="Heathcott R."/>
            <person name="Holmes S.J."/>
            <person name="Howden P.J."/>
            <person name="Howe K.L."/>
            <person name="Howell G.R."/>
            <person name="Huckle E."/>
            <person name="Humphray S.J."/>
            <person name="Humphries M.D."/>
            <person name="Hunt A.R."/>
            <person name="Johnson C.M."/>
            <person name="Joy A.A."/>
            <person name="Kay M."/>
            <person name="Keenan S.J."/>
            <person name="Kimberley A.M."/>
            <person name="King A."/>
            <person name="Laird G.K."/>
            <person name="Langford C."/>
            <person name="Lawlor S."/>
            <person name="Leongamornlert D.A."/>
            <person name="Leversha M."/>
            <person name="Lloyd C.R."/>
            <person name="Lloyd D.M."/>
            <person name="Loveland J.E."/>
            <person name="Lovell J."/>
            <person name="Martin S."/>
            <person name="Mashreghi-Mohammadi M."/>
            <person name="Maslen G.L."/>
            <person name="Matthews L."/>
            <person name="McCann O.T."/>
            <person name="McLaren S.J."/>
            <person name="McLay K."/>
            <person name="McMurray A."/>
            <person name="Moore M.J.F."/>
            <person name="Mullikin J.C."/>
            <person name="Niblett D."/>
            <person name="Nickerson T."/>
            <person name="Novik K.L."/>
            <person name="Oliver K."/>
            <person name="Overton-Larty E.K."/>
            <person name="Parker A."/>
            <person name="Patel R."/>
            <person name="Pearce A.V."/>
            <person name="Peck A.I."/>
            <person name="Phillimore B.J.C.T."/>
            <person name="Phillips S."/>
            <person name="Plumb R.W."/>
            <person name="Porter K.M."/>
            <person name="Ramsey Y."/>
            <person name="Ranby S.A."/>
            <person name="Rice C.M."/>
            <person name="Ross M.T."/>
            <person name="Searle S.M."/>
            <person name="Sehra H.K."/>
            <person name="Sheridan E."/>
            <person name="Skuce C.D."/>
            <person name="Smith S."/>
            <person name="Smith M."/>
            <person name="Spraggon L."/>
            <person name="Squares S.L."/>
            <person name="Steward C.A."/>
            <person name="Sycamore N."/>
            <person name="Tamlyn-Hall G."/>
            <person name="Tester J."/>
            <person name="Theaker A.J."/>
            <person name="Thomas D.W."/>
            <person name="Thorpe A."/>
            <person name="Tracey A."/>
            <person name="Tromans A."/>
            <person name="Tubby B."/>
            <person name="Wall M."/>
            <person name="Wallis J.M."/>
            <person name="West A.P."/>
            <person name="White S.S."/>
            <person name="Whitehead S.L."/>
            <person name="Whittaker H."/>
            <person name="Wild A."/>
            <person name="Willey D.J."/>
            <person name="Wilmer T.E."/>
            <person name="Wood J.M."/>
            <person name="Wray P.W."/>
            <person name="Wyatt J.C."/>
            <person name="Young L."/>
            <person name="Younger R.M."/>
            <person name="Bentley D.R."/>
            <person name="Coulson A."/>
            <person name="Durbin R.M."/>
            <person name="Hubbard T."/>
            <person name="Sulston J.E."/>
            <person name="Dunham I."/>
            <person name="Rogers J."/>
            <person name="Beck S."/>
        </authorList>
    </citation>
    <scope>NUCLEOTIDE SEQUENCE [LARGE SCALE GENOMIC DNA]</scope>
</reference>
<reference key="6">
    <citation type="submission" date="2005-07" db="EMBL/GenBank/DDBJ databases">
        <authorList>
            <person name="Mural R.J."/>
            <person name="Istrail S."/>
            <person name="Sutton G.G."/>
            <person name="Florea L."/>
            <person name="Halpern A.L."/>
            <person name="Mobarry C.M."/>
            <person name="Lippert R."/>
            <person name="Walenz B."/>
            <person name="Shatkay H."/>
            <person name="Dew I."/>
            <person name="Miller J.R."/>
            <person name="Flanigan M.J."/>
            <person name="Edwards N.J."/>
            <person name="Bolanos R."/>
            <person name="Fasulo D."/>
            <person name="Halldorsson B.V."/>
            <person name="Hannenhalli S."/>
            <person name="Turner R."/>
            <person name="Yooseph S."/>
            <person name="Lu F."/>
            <person name="Nusskern D.R."/>
            <person name="Shue B.C."/>
            <person name="Zheng X.H."/>
            <person name="Zhong F."/>
            <person name="Delcher A.L."/>
            <person name="Huson D.H."/>
            <person name="Kravitz S.A."/>
            <person name="Mouchard L."/>
            <person name="Reinert K."/>
            <person name="Remington K.A."/>
            <person name="Clark A.G."/>
            <person name="Waterman M.S."/>
            <person name="Eichler E.E."/>
            <person name="Adams M.D."/>
            <person name="Hunkapiller M.W."/>
            <person name="Myers E.W."/>
            <person name="Venter J.C."/>
        </authorList>
    </citation>
    <scope>NUCLEOTIDE SEQUENCE [LARGE SCALE GENOMIC DNA]</scope>
</reference>
<reference key="7">
    <citation type="journal article" date="2004" name="Genome Res.">
        <title>The status, quality, and expansion of the NIH full-length cDNA project: the Mammalian Gene Collection (MGC).</title>
        <authorList>
            <consortium name="The MGC Project Team"/>
        </authorList>
    </citation>
    <scope>NUCLEOTIDE SEQUENCE [LARGE SCALE MRNA]</scope>
    <source>
        <tissue>Brain</tissue>
        <tissue>Uterus</tissue>
    </source>
</reference>
<keyword id="KW-1003">Cell membrane</keyword>
<keyword id="KW-0325">Glycoprotein</keyword>
<keyword id="KW-0336">GPI-anchor</keyword>
<keyword id="KW-0449">Lipoprotein</keyword>
<keyword id="KW-0472">Membrane</keyword>
<keyword id="KW-1267">Proteomics identification</keyword>
<keyword id="KW-1185">Reference proteome</keyword>
<keyword id="KW-0732">Signal</keyword>
<keyword id="KW-0770">Synapse</keyword>